<reference key="1">
    <citation type="journal article" date="2010" name="Genome Biol. Evol.">
        <title>Continuing evolution of Burkholderia mallei through genome reduction and large-scale rearrangements.</title>
        <authorList>
            <person name="Losada L."/>
            <person name="Ronning C.M."/>
            <person name="DeShazer D."/>
            <person name="Woods D."/>
            <person name="Fedorova N."/>
            <person name="Kim H.S."/>
            <person name="Shabalina S.A."/>
            <person name="Pearson T.R."/>
            <person name="Brinkac L."/>
            <person name="Tan P."/>
            <person name="Nandi T."/>
            <person name="Crabtree J."/>
            <person name="Badger J."/>
            <person name="Beckstrom-Sternberg S."/>
            <person name="Saqib M."/>
            <person name="Schutzer S.E."/>
            <person name="Keim P."/>
            <person name="Nierman W.C."/>
        </authorList>
    </citation>
    <scope>NUCLEOTIDE SEQUENCE [LARGE SCALE GENOMIC DNA]</scope>
    <source>
        <strain>1106a</strain>
    </source>
</reference>
<protein>
    <recommendedName>
        <fullName evidence="1">Chorismate synthase</fullName>
        <shortName evidence="1">CS</shortName>
        <ecNumber evidence="1">4.2.3.5</ecNumber>
    </recommendedName>
    <alternativeName>
        <fullName evidence="1">5-enolpyruvylshikimate-3-phosphate phospholyase</fullName>
    </alternativeName>
</protein>
<sequence>MSGNTLGTLFTVTTFGESHGPAIGCVIDGCPPGMALTEADVQLELDRRKPGTSRHVTQRQEPDQVEILSGVFEGVTTGAPIALLIRNTDQRSKDYGNIAETFRPGHADYTYWQKYGVRDYRGGGRSSARLTAPVVGAGAIAKKWLRERFGVEVRGYMSALGEIEIPFVDWSHVRENPFFAPNADIVPQLEGYMDALRKDGDSIGARIDVVASGVPVGWGEPLFDRLDADIAHAMMGINAVKGVEIGAGFASVAQRGSVHGDELTPDGFVGNHAGGVLGGISTGQDITVSIAIKPTSSIRTPRRSITRAGEPAVVETFGRHDPCVGIRATPIAESMLALVLIDHALRHRAQCGDVSSATPRIAARAPDAQ</sequence>
<gene>
    <name evidence="1" type="primary">aroC</name>
    <name type="ordered locus">BURPS1106A_1713</name>
</gene>
<feature type="chain" id="PRO_1000022468" description="Chorismate synthase">
    <location>
        <begin position="1"/>
        <end position="369"/>
    </location>
</feature>
<feature type="binding site" evidence="1">
    <location>
        <position position="48"/>
    </location>
    <ligand>
        <name>NADP(+)</name>
        <dbReference type="ChEBI" id="CHEBI:58349"/>
    </ligand>
</feature>
<feature type="binding site" evidence="1">
    <location>
        <position position="54"/>
    </location>
    <ligand>
        <name>NADP(+)</name>
        <dbReference type="ChEBI" id="CHEBI:58349"/>
    </ligand>
</feature>
<feature type="binding site" evidence="1">
    <location>
        <begin position="125"/>
        <end position="127"/>
    </location>
    <ligand>
        <name>FMN</name>
        <dbReference type="ChEBI" id="CHEBI:58210"/>
    </ligand>
</feature>
<feature type="binding site" evidence="1">
    <location>
        <begin position="238"/>
        <end position="239"/>
    </location>
    <ligand>
        <name>FMN</name>
        <dbReference type="ChEBI" id="CHEBI:58210"/>
    </ligand>
</feature>
<feature type="binding site" evidence="1">
    <location>
        <position position="278"/>
    </location>
    <ligand>
        <name>FMN</name>
        <dbReference type="ChEBI" id="CHEBI:58210"/>
    </ligand>
</feature>
<feature type="binding site" evidence="1">
    <location>
        <begin position="293"/>
        <end position="297"/>
    </location>
    <ligand>
        <name>FMN</name>
        <dbReference type="ChEBI" id="CHEBI:58210"/>
    </ligand>
</feature>
<feature type="binding site" evidence="1">
    <location>
        <position position="319"/>
    </location>
    <ligand>
        <name>FMN</name>
        <dbReference type="ChEBI" id="CHEBI:58210"/>
    </ligand>
</feature>
<keyword id="KW-0028">Amino-acid biosynthesis</keyword>
<keyword id="KW-0057">Aromatic amino acid biosynthesis</keyword>
<keyword id="KW-0274">FAD</keyword>
<keyword id="KW-0285">Flavoprotein</keyword>
<keyword id="KW-0288">FMN</keyword>
<keyword id="KW-0456">Lyase</keyword>
<keyword id="KW-0521">NADP</keyword>
<dbReference type="EC" id="4.2.3.5" evidence="1"/>
<dbReference type="EMBL" id="CP000572">
    <property type="protein sequence ID" value="ABN90318.1"/>
    <property type="molecule type" value="Genomic_DNA"/>
</dbReference>
<dbReference type="RefSeq" id="WP_004534774.1">
    <property type="nucleotide sequence ID" value="NC_009076.1"/>
</dbReference>
<dbReference type="SMR" id="A3NUG3"/>
<dbReference type="GeneID" id="93060029"/>
<dbReference type="KEGG" id="bpl:BURPS1106A_1713"/>
<dbReference type="HOGENOM" id="CLU_034547_0_2_4"/>
<dbReference type="UniPathway" id="UPA00053">
    <property type="reaction ID" value="UER00090"/>
</dbReference>
<dbReference type="Proteomes" id="UP000006738">
    <property type="component" value="Chromosome I"/>
</dbReference>
<dbReference type="GO" id="GO:0005829">
    <property type="term" value="C:cytosol"/>
    <property type="evidence" value="ECO:0007669"/>
    <property type="project" value="TreeGrafter"/>
</dbReference>
<dbReference type="GO" id="GO:0004107">
    <property type="term" value="F:chorismate synthase activity"/>
    <property type="evidence" value="ECO:0007669"/>
    <property type="project" value="UniProtKB-UniRule"/>
</dbReference>
<dbReference type="GO" id="GO:0010181">
    <property type="term" value="F:FMN binding"/>
    <property type="evidence" value="ECO:0007669"/>
    <property type="project" value="TreeGrafter"/>
</dbReference>
<dbReference type="GO" id="GO:0008652">
    <property type="term" value="P:amino acid biosynthetic process"/>
    <property type="evidence" value="ECO:0007669"/>
    <property type="project" value="UniProtKB-KW"/>
</dbReference>
<dbReference type="GO" id="GO:0009073">
    <property type="term" value="P:aromatic amino acid family biosynthetic process"/>
    <property type="evidence" value="ECO:0007669"/>
    <property type="project" value="UniProtKB-KW"/>
</dbReference>
<dbReference type="GO" id="GO:0009423">
    <property type="term" value="P:chorismate biosynthetic process"/>
    <property type="evidence" value="ECO:0007669"/>
    <property type="project" value="UniProtKB-UniRule"/>
</dbReference>
<dbReference type="CDD" id="cd07304">
    <property type="entry name" value="Chorismate_synthase"/>
    <property type="match status" value="1"/>
</dbReference>
<dbReference type="FunFam" id="3.60.150.10:FF:000001">
    <property type="entry name" value="Chorismate synthase"/>
    <property type="match status" value="1"/>
</dbReference>
<dbReference type="Gene3D" id="3.60.150.10">
    <property type="entry name" value="Chorismate synthase AroC"/>
    <property type="match status" value="1"/>
</dbReference>
<dbReference type="HAMAP" id="MF_00300">
    <property type="entry name" value="Chorismate_synth"/>
    <property type="match status" value="1"/>
</dbReference>
<dbReference type="InterPro" id="IPR000453">
    <property type="entry name" value="Chorismate_synth"/>
</dbReference>
<dbReference type="InterPro" id="IPR035904">
    <property type="entry name" value="Chorismate_synth_AroC_sf"/>
</dbReference>
<dbReference type="InterPro" id="IPR020541">
    <property type="entry name" value="Chorismate_synthase_CS"/>
</dbReference>
<dbReference type="NCBIfam" id="TIGR00033">
    <property type="entry name" value="aroC"/>
    <property type="match status" value="1"/>
</dbReference>
<dbReference type="NCBIfam" id="NF003793">
    <property type="entry name" value="PRK05382.1"/>
    <property type="match status" value="1"/>
</dbReference>
<dbReference type="PANTHER" id="PTHR21085">
    <property type="entry name" value="CHORISMATE SYNTHASE"/>
    <property type="match status" value="1"/>
</dbReference>
<dbReference type="PANTHER" id="PTHR21085:SF0">
    <property type="entry name" value="CHORISMATE SYNTHASE"/>
    <property type="match status" value="1"/>
</dbReference>
<dbReference type="Pfam" id="PF01264">
    <property type="entry name" value="Chorismate_synt"/>
    <property type="match status" value="1"/>
</dbReference>
<dbReference type="PIRSF" id="PIRSF001456">
    <property type="entry name" value="Chorismate_synth"/>
    <property type="match status" value="1"/>
</dbReference>
<dbReference type="SUPFAM" id="SSF103263">
    <property type="entry name" value="Chorismate synthase, AroC"/>
    <property type="match status" value="1"/>
</dbReference>
<dbReference type="PROSITE" id="PS00787">
    <property type="entry name" value="CHORISMATE_SYNTHASE_1"/>
    <property type="match status" value="1"/>
</dbReference>
<dbReference type="PROSITE" id="PS00788">
    <property type="entry name" value="CHORISMATE_SYNTHASE_2"/>
    <property type="match status" value="1"/>
</dbReference>
<dbReference type="PROSITE" id="PS00789">
    <property type="entry name" value="CHORISMATE_SYNTHASE_3"/>
    <property type="match status" value="1"/>
</dbReference>
<evidence type="ECO:0000255" key="1">
    <source>
        <dbReference type="HAMAP-Rule" id="MF_00300"/>
    </source>
</evidence>
<accession>A3NUG3</accession>
<proteinExistence type="inferred from homology"/>
<name>AROC_BURP0</name>
<comment type="function">
    <text evidence="1">Catalyzes the anti-1,4-elimination of the C-3 phosphate and the C-6 proR hydrogen from 5-enolpyruvylshikimate-3-phosphate (EPSP) to yield chorismate, which is the branch point compound that serves as the starting substrate for the three terminal pathways of aromatic amino acid biosynthesis. This reaction introduces a second double bond into the aromatic ring system.</text>
</comment>
<comment type="catalytic activity">
    <reaction evidence="1">
        <text>5-O-(1-carboxyvinyl)-3-phosphoshikimate = chorismate + phosphate</text>
        <dbReference type="Rhea" id="RHEA:21020"/>
        <dbReference type="ChEBI" id="CHEBI:29748"/>
        <dbReference type="ChEBI" id="CHEBI:43474"/>
        <dbReference type="ChEBI" id="CHEBI:57701"/>
        <dbReference type="EC" id="4.2.3.5"/>
    </reaction>
</comment>
<comment type="cofactor">
    <cofactor evidence="1">
        <name>FMNH2</name>
        <dbReference type="ChEBI" id="CHEBI:57618"/>
    </cofactor>
    <text evidence="1">Reduced FMN (FMNH(2)).</text>
</comment>
<comment type="pathway">
    <text evidence="1">Metabolic intermediate biosynthesis; chorismate biosynthesis; chorismate from D-erythrose 4-phosphate and phosphoenolpyruvate: step 7/7.</text>
</comment>
<comment type="subunit">
    <text evidence="1">Homotetramer.</text>
</comment>
<comment type="similarity">
    <text evidence="1">Belongs to the chorismate synthase family.</text>
</comment>
<organism>
    <name type="scientific">Burkholderia pseudomallei (strain 1106a)</name>
    <dbReference type="NCBI Taxonomy" id="357348"/>
    <lineage>
        <taxon>Bacteria</taxon>
        <taxon>Pseudomonadati</taxon>
        <taxon>Pseudomonadota</taxon>
        <taxon>Betaproteobacteria</taxon>
        <taxon>Burkholderiales</taxon>
        <taxon>Burkholderiaceae</taxon>
        <taxon>Burkholderia</taxon>
        <taxon>pseudomallei group</taxon>
    </lineage>
</organism>